<protein>
    <recommendedName>
        <fullName evidence="2">Elongation factor 1-alpha</fullName>
        <shortName evidence="2">EF-1-alpha</shortName>
        <ecNumber evidence="2">3.6.5.3</ecNumber>
    </recommendedName>
    <alternativeName>
        <fullName evidence="2">Elongation factor Tu</fullName>
        <shortName evidence="2">EF-Tu</shortName>
    </alternativeName>
</protein>
<organism>
    <name type="scientific">Thermoplasma acidophilum (strain ATCC 25905 / DSM 1728 / JCM 9062 / NBRC 15155 / AMRC-C165)</name>
    <dbReference type="NCBI Taxonomy" id="273075"/>
    <lineage>
        <taxon>Archaea</taxon>
        <taxon>Methanobacteriati</taxon>
        <taxon>Thermoplasmatota</taxon>
        <taxon>Thermoplasmata</taxon>
        <taxon>Thermoplasmatales</taxon>
        <taxon>Thermoplasmataceae</taxon>
        <taxon>Thermoplasma</taxon>
    </lineage>
</organism>
<name>EF1A_THEAC</name>
<feature type="chain" id="PRO_0000090996" description="Elongation factor 1-alpha">
    <location>
        <begin position="1"/>
        <end position="424"/>
    </location>
</feature>
<feature type="domain" description="tr-type G">
    <location>
        <begin position="5"/>
        <end position="223"/>
    </location>
</feature>
<feature type="region of interest" description="G1" evidence="1">
    <location>
        <begin position="14"/>
        <end position="21"/>
    </location>
</feature>
<feature type="region of interest" description="G2" evidence="1">
    <location>
        <begin position="70"/>
        <end position="74"/>
    </location>
</feature>
<feature type="region of interest" description="G3" evidence="1">
    <location>
        <begin position="91"/>
        <end position="94"/>
    </location>
</feature>
<feature type="region of interest" description="G4" evidence="1">
    <location>
        <begin position="148"/>
        <end position="151"/>
    </location>
</feature>
<feature type="region of interest" description="G5" evidence="1">
    <location>
        <begin position="187"/>
        <end position="189"/>
    </location>
</feature>
<feature type="binding site" evidence="2">
    <location>
        <begin position="14"/>
        <end position="21"/>
    </location>
    <ligand>
        <name>GTP</name>
        <dbReference type="ChEBI" id="CHEBI:37565"/>
    </ligand>
</feature>
<feature type="binding site" evidence="2">
    <location>
        <position position="21"/>
    </location>
    <ligand>
        <name>Mg(2+)</name>
        <dbReference type="ChEBI" id="CHEBI:18420"/>
    </ligand>
</feature>
<feature type="binding site" evidence="2">
    <location>
        <begin position="91"/>
        <end position="95"/>
    </location>
    <ligand>
        <name>GTP</name>
        <dbReference type="ChEBI" id="CHEBI:37565"/>
    </ligand>
</feature>
<feature type="binding site" evidence="2">
    <location>
        <begin position="148"/>
        <end position="151"/>
    </location>
    <ligand>
        <name>GTP</name>
        <dbReference type="ChEBI" id="CHEBI:37565"/>
    </ligand>
</feature>
<feature type="sequence conflict" description="In Ref. 1; CAA37860." evidence="3" ref="1">
    <original>E</original>
    <variation>D</variation>
    <location>
        <position position="120"/>
    </location>
</feature>
<feature type="sequence conflict" description="In Ref. 1; CAA37860." evidence="3" ref="1">
    <original>R</original>
    <variation>L</variation>
    <location>
        <position position="407"/>
    </location>
</feature>
<keyword id="KW-0963">Cytoplasm</keyword>
<keyword id="KW-0251">Elongation factor</keyword>
<keyword id="KW-0342">GTP-binding</keyword>
<keyword id="KW-0378">Hydrolase</keyword>
<keyword id="KW-0460">Magnesium</keyword>
<keyword id="KW-0479">Metal-binding</keyword>
<keyword id="KW-0547">Nucleotide-binding</keyword>
<keyword id="KW-0648">Protein biosynthesis</keyword>
<keyword id="KW-1185">Reference proteome</keyword>
<reference key="1">
    <citation type="journal article" date="1990" name="FEMS Microbiol. Lett.">
        <title>Cloning and sequencing of the gene coding for the elongation factor 1 alpha from the archaebacterium Thermoplasma acidophilum.</title>
        <authorList>
            <person name="Tesch A."/>
            <person name="Klink F."/>
        </authorList>
    </citation>
    <scope>NUCLEOTIDE SEQUENCE [GENOMIC DNA]</scope>
    <source>
        <strain>ATCC 25905 / DSM 1728 / JCM 9062 / NBRC 15155 / AMRC-C165</strain>
    </source>
</reference>
<reference key="2">
    <citation type="journal article" date="2000" name="Nature">
        <title>The genome sequence of the thermoacidophilic scavenger Thermoplasma acidophilum.</title>
        <authorList>
            <person name="Ruepp A."/>
            <person name="Graml W."/>
            <person name="Santos-Martinez M.-L."/>
            <person name="Koretke K.K."/>
            <person name="Volker C."/>
            <person name="Mewes H.-W."/>
            <person name="Frishman D."/>
            <person name="Stocker S."/>
            <person name="Lupas A.N."/>
            <person name="Baumeister W."/>
        </authorList>
    </citation>
    <scope>NUCLEOTIDE SEQUENCE [LARGE SCALE GENOMIC DNA]</scope>
    <source>
        <strain>ATCC 25905 / DSM 1728 / JCM 9062 / NBRC 15155 / AMRC-C165</strain>
    </source>
</reference>
<accession>P19486</accession>
<gene>
    <name evidence="2" type="primary">tuf</name>
    <name type="ordered locus">Ta0444</name>
</gene>
<dbReference type="EC" id="3.6.5.3" evidence="2"/>
<dbReference type="EMBL" id="X53866">
    <property type="protein sequence ID" value="CAA37860.1"/>
    <property type="molecule type" value="Genomic_DNA"/>
</dbReference>
<dbReference type="EMBL" id="AL445064">
    <property type="protein sequence ID" value="CAC11586.1"/>
    <property type="status" value="ALT_INIT"/>
    <property type="molecule type" value="Genomic_DNA"/>
</dbReference>
<dbReference type="PIR" id="S12090">
    <property type="entry name" value="S12090"/>
</dbReference>
<dbReference type="RefSeq" id="WP_048161592.1">
    <property type="nucleotide sequence ID" value="NC_002578.1"/>
</dbReference>
<dbReference type="SMR" id="P19486"/>
<dbReference type="FunCoup" id="P19486">
    <property type="interactions" value="103"/>
</dbReference>
<dbReference type="STRING" id="273075.gene:9571664"/>
<dbReference type="PaxDb" id="273075-Ta0444"/>
<dbReference type="EnsemblBacteria" id="CAC11586">
    <property type="protein sequence ID" value="CAC11586"/>
    <property type="gene ID" value="CAC11586"/>
</dbReference>
<dbReference type="KEGG" id="tac:Ta0444"/>
<dbReference type="eggNOG" id="arCOG01561">
    <property type="taxonomic scope" value="Archaea"/>
</dbReference>
<dbReference type="HOGENOM" id="CLU_007265_3_5_2"/>
<dbReference type="InParanoid" id="P19486"/>
<dbReference type="OrthoDB" id="371718at2157"/>
<dbReference type="Proteomes" id="UP000001024">
    <property type="component" value="Chromosome"/>
</dbReference>
<dbReference type="GO" id="GO:0005737">
    <property type="term" value="C:cytoplasm"/>
    <property type="evidence" value="ECO:0007669"/>
    <property type="project" value="UniProtKB-SubCell"/>
</dbReference>
<dbReference type="GO" id="GO:0005525">
    <property type="term" value="F:GTP binding"/>
    <property type="evidence" value="ECO:0007669"/>
    <property type="project" value="UniProtKB-UniRule"/>
</dbReference>
<dbReference type="GO" id="GO:0003924">
    <property type="term" value="F:GTPase activity"/>
    <property type="evidence" value="ECO:0007669"/>
    <property type="project" value="InterPro"/>
</dbReference>
<dbReference type="GO" id="GO:0003746">
    <property type="term" value="F:translation elongation factor activity"/>
    <property type="evidence" value="ECO:0007669"/>
    <property type="project" value="UniProtKB-UniRule"/>
</dbReference>
<dbReference type="CDD" id="cd01883">
    <property type="entry name" value="EF1_alpha"/>
    <property type="match status" value="1"/>
</dbReference>
<dbReference type="CDD" id="cd03693">
    <property type="entry name" value="EF1_alpha_II"/>
    <property type="match status" value="1"/>
</dbReference>
<dbReference type="CDD" id="cd03705">
    <property type="entry name" value="EF1_alpha_III"/>
    <property type="match status" value="1"/>
</dbReference>
<dbReference type="FunFam" id="2.40.30.10:FF:000003">
    <property type="entry name" value="Elongation factor 1-alpha"/>
    <property type="match status" value="1"/>
</dbReference>
<dbReference type="FunFam" id="2.40.30.10:FF:000005">
    <property type="entry name" value="Elongation factor 1-alpha"/>
    <property type="match status" value="1"/>
</dbReference>
<dbReference type="Gene3D" id="3.40.50.300">
    <property type="entry name" value="P-loop containing nucleotide triphosphate hydrolases"/>
    <property type="match status" value="1"/>
</dbReference>
<dbReference type="Gene3D" id="2.40.30.10">
    <property type="entry name" value="Translation factors"/>
    <property type="match status" value="2"/>
</dbReference>
<dbReference type="HAMAP" id="MF_00118_A">
    <property type="entry name" value="EF_Tu_A"/>
    <property type="match status" value="1"/>
</dbReference>
<dbReference type="InterPro" id="IPR004161">
    <property type="entry name" value="EFTu-like_2"/>
</dbReference>
<dbReference type="InterPro" id="IPR031157">
    <property type="entry name" value="G_TR_CS"/>
</dbReference>
<dbReference type="InterPro" id="IPR054696">
    <property type="entry name" value="GTP-eEF1A_C"/>
</dbReference>
<dbReference type="InterPro" id="IPR027417">
    <property type="entry name" value="P-loop_NTPase"/>
</dbReference>
<dbReference type="InterPro" id="IPR005225">
    <property type="entry name" value="Small_GTP-bd"/>
</dbReference>
<dbReference type="InterPro" id="IPR000795">
    <property type="entry name" value="T_Tr_GTP-bd_dom"/>
</dbReference>
<dbReference type="InterPro" id="IPR050100">
    <property type="entry name" value="TRAFAC_GTPase_members"/>
</dbReference>
<dbReference type="InterPro" id="IPR009000">
    <property type="entry name" value="Transl_B-barrel_sf"/>
</dbReference>
<dbReference type="InterPro" id="IPR009001">
    <property type="entry name" value="Transl_elong_EF1A/Init_IF2_C"/>
</dbReference>
<dbReference type="InterPro" id="IPR004539">
    <property type="entry name" value="Transl_elong_EF1A_euk/arc"/>
</dbReference>
<dbReference type="NCBIfam" id="TIGR00483">
    <property type="entry name" value="EF-1_alpha"/>
    <property type="match status" value="1"/>
</dbReference>
<dbReference type="NCBIfam" id="NF008969">
    <property type="entry name" value="PRK12317.1"/>
    <property type="match status" value="1"/>
</dbReference>
<dbReference type="NCBIfam" id="TIGR00231">
    <property type="entry name" value="small_GTP"/>
    <property type="match status" value="1"/>
</dbReference>
<dbReference type="PANTHER" id="PTHR23115">
    <property type="entry name" value="TRANSLATION FACTOR"/>
    <property type="match status" value="1"/>
</dbReference>
<dbReference type="Pfam" id="PF22594">
    <property type="entry name" value="GTP-eEF1A_C"/>
    <property type="match status" value="1"/>
</dbReference>
<dbReference type="Pfam" id="PF00009">
    <property type="entry name" value="GTP_EFTU"/>
    <property type="match status" value="1"/>
</dbReference>
<dbReference type="Pfam" id="PF03144">
    <property type="entry name" value="GTP_EFTU_D2"/>
    <property type="match status" value="1"/>
</dbReference>
<dbReference type="PRINTS" id="PR00315">
    <property type="entry name" value="ELONGATNFCT"/>
</dbReference>
<dbReference type="SUPFAM" id="SSF50465">
    <property type="entry name" value="EF-Tu/eEF-1alpha/eIF2-gamma C-terminal domain"/>
    <property type="match status" value="1"/>
</dbReference>
<dbReference type="SUPFAM" id="SSF52540">
    <property type="entry name" value="P-loop containing nucleoside triphosphate hydrolases"/>
    <property type="match status" value="1"/>
</dbReference>
<dbReference type="SUPFAM" id="SSF50447">
    <property type="entry name" value="Translation proteins"/>
    <property type="match status" value="1"/>
</dbReference>
<dbReference type="PROSITE" id="PS00301">
    <property type="entry name" value="G_TR_1"/>
    <property type="match status" value="1"/>
</dbReference>
<dbReference type="PROSITE" id="PS51722">
    <property type="entry name" value="G_TR_2"/>
    <property type="match status" value="1"/>
</dbReference>
<sequence>MASQKPHLNLITIGHVDHGKSTLVGRLLYEHGEIPAHIIEEYRKEAEQKGKATFEFAWVMDRFKEERERGVTIDLAHRKFETDKYYFTLIDAPGHRDFVKNMITGTSQADAAILVISAREGEGVMEQTREHAFLARTLGVPQMVVAINKMDATSPPYSEKRYNEVKADAEKLLRSIGFKDISFVPISGYKGDNVTKPSPNMPWYKGPTLLQALDAFKVPEKPINKPLRIPVEDVYSITGIGTVPVGRVETGVLKPGDKVIFLPADKQGDVKSIEMHHEPLQQAEPGDNIGFNVRGIAKNDIKRGDVCGHLDTPPTVVKAFTAQIIVLNHPSVIAPGYKPVFHVHTAQVACRIDEIVKTLNPKDGTTLKEKPDFIKNGDVAIVKVIPDKPLVIEKVSEIPQLGRFAVRDMGQTVAAGQCIDLEKR</sequence>
<proteinExistence type="inferred from homology"/>
<evidence type="ECO:0000250" key="1"/>
<evidence type="ECO:0000255" key="2">
    <source>
        <dbReference type="HAMAP-Rule" id="MF_00118"/>
    </source>
</evidence>
<evidence type="ECO:0000305" key="3"/>
<comment type="function">
    <text evidence="2">GTP hydrolase that promotes the GTP-dependent binding of aminoacyl-tRNA to the A-site of ribosomes during protein biosynthesis.</text>
</comment>
<comment type="catalytic activity">
    <reaction evidence="2">
        <text>GTP + H2O = GDP + phosphate + H(+)</text>
        <dbReference type="Rhea" id="RHEA:19669"/>
        <dbReference type="ChEBI" id="CHEBI:15377"/>
        <dbReference type="ChEBI" id="CHEBI:15378"/>
        <dbReference type="ChEBI" id="CHEBI:37565"/>
        <dbReference type="ChEBI" id="CHEBI:43474"/>
        <dbReference type="ChEBI" id="CHEBI:58189"/>
        <dbReference type="EC" id="3.6.5.3"/>
    </reaction>
    <physiologicalReaction direction="left-to-right" evidence="2">
        <dbReference type="Rhea" id="RHEA:19670"/>
    </physiologicalReaction>
</comment>
<comment type="subcellular location">
    <subcellularLocation>
        <location>Cytoplasm</location>
    </subcellularLocation>
</comment>
<comment type="similarity">
    <text evidence="2">Belongs to the TRAFAC class translation factor GTPase superfamily. Classic translation factor GTPase family. EF-Tu/EF-1A subfamily.</text>
</comment>
<comment type="sequence caution" evidence="3">
    <conflict type="erroneous initiation">
        <sequence resource="EMBL-CDS" id="CAC11586"/>
    </conflict>
</comment>